<reference key="1">
    <citation type="journal article" date="2004" name="Proc. Natl. Acad. Sci. U.S.A.">
        <title>Comparison of the genome of the oral pathogen Treponema denticola with other spirochete genomes.</title>
        <authorList>
            <person name="Seshadri R."/>
            <person name="Myers G.S.A."/>
            <person name="Tettelin H."/>
            <person name="Eisen J.A."/>
            <person name="Heidelberg J.F."/>
            <person name="Dodson R.J."/>
            <person name="Davidsen T.M."/>
            <person name="DeBoy R.T."/>
            <person name="Fouts D.E."/>
            <person name="Haft D.H."/>
            <person name="Selengut J."/>
            <person name="Ren Q."/>
            <person name="Brinkac L.M."/>
            <person name="Madupu R."/>
            <person name="Kolonay J.F."/>
            <person name="Durkin S.A."/>
            <person name="Daugherty S.C."/>
            <person name="Shetty J."/>
            <person name="Shvartsbeyn A."/>
            <person name="Gebregeorgis E."/>
            <person name="Geer K."/>
            <person name="Tsegaye G."/>
            <person name="Malek J.A."/>
            <person name="Ayodeji B."/>
            <person name="Shatsman S."/>
            <person name="McLeod M.P."/>
            <person name="Smajs D."/>
            <person name="Howell J.K."/>
            <person name="Pal S."/>
            <person name="Amin A."/>
            <person name="Vashisth P."/>
            <person name="McNeill T.Z."/>
            <person name="Xiang Q."/>
            <person name="Sodergren E."/>
            <person name="Baca E."/>
            <person name="Weinstock G.M."/>
            <person name="Norris S.J."/>
            <person name="Fraser C.M."/>
            <person name="Paulsen I.T."/>
        </authorList>
    </citation>
    <scope>NUCLEOTIDE SEQUENCE [LARGE SCALE GENOMIC DNA]</scope>
    <source>
        <strain>ATCC 35405 / DSM 14222 / CIP 103919 / JCM 8153 / KCTC 15104</strain>
    </source>
</reference>
<sequence length="121" mass="13693">MARIAGVDLPNKHVNVSLTYIYGISTSSANKICEATKVDPMKKMNDLDEAELAAIREVIDREYKVEGRLRTEVALNIKRLQDIGCYRGQRHRKGLPVRGQRTRTNARTRKGKKKTVAGKKK</sequence>
<gene>
    <name evidence="1" type="primary">rpsM</name>
    <name type="ordered locus">TDE_0789</name>
</gene>
<accession>Q73PL0</accession>
<keyword id="KW-1185">Reference proteome</keyword>
<keyword id="KW-0687">Ribonucleoprotein</keyword>
<keyword id="KW-0689">Ribosomal protein</keyword>
<keyword id="KW-0694">RNA-binding</keyword>
<keyword id="KW-0699">rRNA-binding</keyword>
<keyword id="KW-0820">tRNA-binding</keyword>
<evidence type="ECO:0000255" key="1">
    <source>
        <dbReference type="HAMAP-Rule" id="MF_01315"/>
    </source>
</evidence>
<evidence type="ECO:0000256" key="2">
    <source>
        <dbReference type="SAM" id="MobiDB-lite"/>
    </source>
</evidence>
<evidence type="ECO:0000305" key="3"/>
<feature type="chain" id="PRO_0000230578" description="Small ribosomal subunit protein uS13">
    <location>
        <begin position="1"/>
        <end position="121"/>
    </location>
</feature>
<feature type="region of interest" description="Disordered" evidence="2">
    <location>
        <begin position="91"/>
        <end position="121"/>
    </location>
</feature>
<dbReference type="EMBL" id="AE017226">
    <property type="protein sequence ID" value="AAS11280.1"/>
    <property type="molecule type" value="Genomic_DNA"/>
</dbReference>
<dbReference type="RefSeq" id="NP_971399.1">
    <property type="nucleotide sequence ID" value="NC_002967.9"/>
</dbReference>
<dbReference type="RefSeq" id="WP_002670034.1">
    <property type="nucleotide sequence ID" value="NC_002967.9"/>
</dbReference>
<dbReference type="SMR" id="Q73PL0"/>
<dbReference type="STRING" id="243275.TDE_0789"/>
<dbReference type="PaxDb" id="243275-TDE_0789"/>
<dbReference type="GeneID" id="2740667"/>
<dbReference type="KEGG" id="tde:TDE_0789"/>
<dbReference type="PATRIC" id="fig|243275.7.peg.762"/>
<dbReference type="eggNOG" id="COG0099">
    <property type="taxonomic scope" value="Bacteria"/>
</dbReference>
<dbReference type="HOGENOM" id="CLU_103849_1_2_12"/>
<dbReference type="OrthoDB" id="9803610at2"/>
<dbReference type="Proteomes" id="UP000008212">
    <property type="component" value="Chromosome"/>
</dbReference>
<dbReference type="GO" id="GO:0005829">
    <property type="term" value="C:cytosol"/>
    <property type="evidence" value="ECO:0007669"/>
    <property type="project" value="TreeGrafter"/>
</dbReference>
<dbReference type="GO" id="GO:0015935">
    <property type="term" value="C:small ribosomal subunit"/>
    <property type="evidence" value="ECO:0007669"/>
    <property type="project" value="TreeGrafter"/>
</dbReference>
<dbReference type="GO" id="GO:0019843">
    <property type="term" value="F:rRNA binding"/>
    <property type="evidence" value="ECO:0007669"/>
    <property type="project" value="UniProtKB-UniRule"/>
</dbReference>
<dbReference type="GO" id="GO:0003735">
    <property type="term" value="F:structural constituent of ribosome"/>
    <property type="evidence" value="ECO:0007669"/>
    <property type="project" value="InterPro"/>
</dbReference>
<dbReference type="GO" id="GO:0000049">
    <property type="term" value="F:tRNA binding"/>
    <property type="evidence" value="ECO:0007669"/>
    <property type="project" value="UniProtKB-UniRule"/>
</dbReference>
<dbReference type="GO" id="GO:0006412">
    <property type="term" value="P:translation"/>
    <property type="evidence" value="ECO:0007669"/>
    <property type="project" value="UniProtKB-UniRule"/>
</dbReference>
<dbReference type="FunFam" id="1.10.8.50:FF:000001">
    <property type="entry name" value="30S ribosomal protein S13"/>
    <property type="match status" value="1"/>
</dbReference>
<dbReference type="FunFam" id="4.10.910.10:FF:000001">
    <property type="entry name" value="30S ribosomal protein S13"/>
    <property type="match status" value="1"/>
</dbReference>
<dbReference type="Gene3D" id="1.10.8.50">
    <property type="match status" value="1"/>
</dbReference>
<dbReference type="Gene3D" id="4.10.910.10">
    <property type="entry name" value="30s ribosomal protein s13, domain 2"/>
    <property type="match status" value="1"/>
</dbReference>
<dbReference type="HAMAP" id="MF_01315">
    <property type="entry name" value="Ribosomal_uS13"/>
    <property type="match status" value="1"/>
</dbReference>
<dbReference type="InterPro" id="IPR027437">
    <property type="entry name" value="Rbsml_uS13_C"/>
</dbReference>
<dbReference type="InterPro" id="IPR001892">
    <property type="entry name" value="Ribosomal_uS13"/>
</dbReference>
<dbReference type="InterPro" id="IPR010979">
    <property type="entry name" value="Ribosomal_uS13-like_H2TH"/>
</dbReference>
<dbReference type="InterPro" id="IPR019980">
    <property type="entry name" value="Ribosomal_uS13_bac-type"/>
</dbReference>
<dbReference type="InterPro" id="IPR018269">
    <property type="entry name" value="Ribosomal_uS13_CS"/>
</dbReference>
<dbReference type="NCBIfam" id="TIGR03631">
    <property type="entry name" value="uS13_bact"/>
    <property type="match status" value="1"/>
</dbReference>
<dbReference type="PANTHER" id="PTHR10871">
    <property type="entry name" value="30S RIBOSOMAL PROTEIN S13/40S RIBOSOMAL PROTEIN S18"/>
    <property type="match status" value="1"/>
</dbReference>
<dbReference type="PANTHER" id="PTHR10871:SF1">
    <property type="entry name" value="SMALL RIBOSOMAL SUBUNIT PROTEIN US13M"/>
    <property type="match status" value="1"/>
</dbReference>
<dbReference type="Pfam" id="PF00416">
    <property type="entry name" value="Ribosomal_S13"/>
    <property type="match status" value="1"/>
</dbReference>
<dbReference type="PIRSF" id="PIRSF002134">
    <property type="entry name" value="Ribosomal_S13"/>
    <property type="match status" value="1"/>
</dbReference>
<dbReference type="SUPFAM" id="SSF46946">
    <property type="entry name" value="S13-like H2TH domain"/>
    <property type="match status" value="1"/>
</dbReference>
<dbReference type="PROSITE" id="PS00646">
    <property type="entry name" value="RIBOSOMAL_S13_1"/>
    <property type="match status" value="1"/>
</dbReference>
<dbReference type="PROSITE" id="PS50159">
    <property type="entry name" value="RIBOSOMAL_S13_2"/>
    <property type="match status" value="1"/>
</dbReference>
<organism>
    <name type="scientific">Treponema denticola (strain ATCC 35405 / DSM 14222 / CIP 103919 / JCM 8153 / KCTC 15104)</name>
    <dbReference type="NCBI Taxonomy" id="243275"/>
    <lineage>
        <taxon>Bacteria</taxon>
        <taxon>Pseudomonadati</taxon>
        <taxon>Spirochaetota</taxon>
        <taxon>Spirochaetia</taxon>
        <taxon>Spirochaetales</taxon>
        <taxon>Treponemataceae</taxon>
        <taxon>Treponema</taxon>
    </lineage>
</organism>
<name>RS13_TREDE</name>
<comment type="function">
    <text evidence="1">Located at the top of the head of the 30S subunit, it contacts several helices of the 16S rRNA. In the 70S ribosome it contacts the 23S rRNA (bridge B1a) and protein L5 of the 50S subunit (bridge B1b), connecting the 2 subunits; these bridges are implicated in subunit movement. Contacts the tRNAs in the A and P-sites.</text>
</comment>
<comment type="subunit">
    <text evidence="1">Part of the 30S ribosomal subunit. Forms a loose heterodimer with protein S19. Forms two bridges to the 50S subunit in the 70S ribosome.</text>
</comment>
<comment type="similarity">
    <text evidence="1">Belongs to the universal ribosomal protein uS13 family.</text>
</comment>
<proteinExistence type="inferred from homology"/>
<protein>
    <recommendedName>
        <fullName evidence="1">Small ribosomal subunit protein uS13</fullName>
    </recommendedName>
    <alternativeName>
        <fullName evidence="3">30S ribosomal protein S13</fullName>
    </alternativeName>
</protein>